<keyword id="KW-0963">Cytoplasm</keyword>
<keyword id="KW-0378">Hydrolase</keyword>
<keyword id="KW-0694">RNA-binding</keyword>
<keyword id="KW-0820">tRNA-binding</keyword>
<comment type="function">
    <text evidence="1">Hydrolyzes ribosome-free peptidyl-tRNAs (with 1 or more amino acids incorporated), which drop off the ribosome during protein synthesis, or as a result of ribosome stalling.</text>
</comment>
<comment type="function">
    <text evidence="1">Catalyzes the release of premature peptidyl moieties from peptidyl-tRNA molecules trapped in stalled 50S ribosomal subunits, and thus maintains levels of free tRNAs and 50S ribosomes.</text>
</comment>
<comment type="catalytic activity">
    <reaction evidence="1">
        <text>an N-acyl-L-alpha-aminoacyl-tRNA + H2O = an N-acyl-L-amino acid + a tRNA + H(+)</text>
        <dbReference type="Rhea" id="RHEA:54448"/>
        <dbReference type="Rhea" id="RHEA-COMP:10123"/>
        <dbReference type="Rhea" id="RHEA-COMP:13883"/>
        <dbReference type="ChEBI" id="CHEBI:15377"/>
        <dbReference type="ChEBI" id="CHEBI:15378"/>
        <dbReference type="ChEBI" id="CHEBI:59874"/>
        <dbReference type="ChEBI" id="CHEBI:78442"/>
        <dbReference type="ChEBI" id="CHEBI:138191"/>
        <dbReference type="EC" id="3.1.1.29"/>
    </reaction>
</comment>
<comment type="subunit">
    <text evidence="1">Monomer.</text>
</comment>
<comment type="subcellular location">
    <subcellularLocation>
        <location evidence="1">Cytoplasm</location>
    </subcellularLocation>
</comment>
<comment type="similarity">
    <text evidence="1">Belongs to the PTH family.</text>
</comment>
<dbReference type="EC" id="3.1.1.29" evidence="1"/>
<dbReference type="EMBL" id="AM260522">
    <property type="protein sequence ID" value="CAK00453.1"/>
    <property type="molecule type" value="Genomic_DNA"/>
</dbReference>
<dbReference type="RefSeq" id="WP_011578535.1">
    <property type="nucleotide sequence ID" value="NC_008229.1"/>
</dbReference>
<dbReference type="SMR" id="Q17V73"/>
<dbReference type="STRING" id="382638.Hac_1757"/>
<dbReference type="GeneID" id="31758992"/>
<dbReference type="KEGG" id="hac:Hac_1757"/>
<dbReference type="eggNOG" id="COG0193">
    <property type="taxonomic scope" value="Bacteria"/>
</dbReference>
<dbReference type="HOGENOM" id="CLU_062456_4_1_7"/>
<dbReference type="OrthoDB" id="9800507at2"/>
<dbReference type="BioCyc" id="HACI382638:HAC_RS07475-MONOMER"/>
<dbReference type="Proteomes" id="UP000000775">
    <property type="component" value="Chromosome"/>
</dbReference>
<dbReference type="GO" id="GO:0005737">
    <property type="term" value="C:cytoplasm"/>
    <property type="evidence" value="ECO:0007669"/>
    <property type="project" value="UniProtKB-SubCell"/>
</dbReference>
<dbReference type="GO" id="GO:0004045">
    <property type="term" value="F:peptidyl-tRNA hydrolase activity"/>
    <property type="evidence" value="ECO:0007669"/>
    <property type="project" value="UniProtKB-UniRule"/>
</dbReference>
<dbReference type="GO" id="GO:0000049">
    <property type="term" value="F:tRNA binding"/>
    <property type="evidence" value="ECO:0007669"/>
    <property type="project" value="UniProtKB-UniRule"/>
</dbReference>
<dbReference type="GO" id="GO:0006515">
    <property type="term" value="P:protein quality control for misfolded or incompletely synthesized proteins"/>
    <property type="evidence" value="ECO:0007669"/>
    <property type="project" value="UniProtKB-UniRule"/>
</dbReference>
<dbReference type="GO" id="GO:0072344">
    <property type="term" value="P:rescue of stalled ribosome"/>
    <property type="evidence" value="ECO:0007669"/>
    <property type="project" value="UniProtKB-UniRule"/>
</dbReference>
<dbReference type="CDD" id="cd00462">
    <property type="entry name" value="PTH"/>
    <property type="match status" value="1"/>
</dbReference>
<dbReference type="Gene3D" id="3.40.50.1470">
    <property type="entry name" value="Peptidyl-tRNA hydrolase"/>
    <property type="match status" value="1"/>
</dbReference>
<dbReference type="HAMAP" id="MF_00083">
    <property type="entry name" value="Pept_tRNA_hydro_bact"/>
    <property type="match status" value="1"/>
</dbReference>
<dbReference type="InterPro" id="IPR001328">
    <property type="entry name" value="Pept_tRNA_hydro"/>
</dbReference>
<dbReference type="InterPro" id="IPR018171">
    <property type="entry name" value="Pept_tRNA_hydro_CS"/>
</dbReference>
<dbReference type="InterPro" id="IPR036416">
    <property type="entry name" value="Pept_tRNA_hydro_sf"/>
</dbReference>
<dbReference type="NCBIfam" id="TIGR00447">
    <property type="entry name" value="pth"/>
    <property type="match status" value="1"/>
</dbReference>
<dbReference type="PANTHER" id="PTHR17224">
    <property type="entry name" value="PEPTIDYL-TRNA HYDROLASE"/>
    <property type="match status" value="1"/>
</dbReference>
<dbReference type="PANTHER" id="PTHR17224:SF1">
    <property type="entry name" value="PEPTIDYL-TRNA HYDROLASE"/>
    <property type="match status" value="1"/>
</dbReference>
<dbReference type="Pfam" id="PF01195">
    <property type="entry name" value="Pept_tRNA_hydro"/>
    <property type="match status" value="1"/>
</dbReference>
<dbReference type="SUPFAM" id="SSF53178">
    <property type="entry name" value="Peptidyl-tRNA hydrolase-like"/>
    <property type="match status" value="1"/>
</dbReference>
<dbReference type="PROSITE" id="PS01195">
    <property type="entry name" value="PEPT_TRNA_HYDROL_1"/>
    <property type="match status" value="1"/>
</dbReference>
<dbReference type="PROSITE" id="PS01196">
    <property type="entry name" value="PEPT_TRNA_HYDROL_2"/>
    <property type="match status" value="1"/>
</dbReference>
<reference key="1">
    <citation type="journal article" date="2006" name="PLoS Genet.">
        <title>Who ate whom? Adaptive Helicobacter genomic changes that accompanied a host jump from early humans to large felines.</title>
        <authorList>
            <person name="Eppinger M."/>
            <person name="Baar C."/>
            <person name="Linz B."/>
            <person name="Raddatz G."/>
            <person name="Lanz C."/>
            <person name="Keller H."/>
            <person name="Morelli G."/>
            <person name="Gressmann H."/>
            <person name="Achtman M."/>
            <person name="Schuster S.C."/>
        </authorList>
    </citation>
    <scope>NUCLEOTIDE SEQUENCE [LARGE SCALE GENOMIC DNA]</scope>
    <source>
        <strain>Sheeba</strain>
    </source>
</reference>
<gene>
    <name evidence="1" type="primary">pth</name>
    <name type="ordered locus">Hac_1757</name>
</gene>
<name>PTH_HELAH</name>
<protein>
    <recommendedName>
        <fullName evidence="1">Peptidyl-tRNA hydrolase</fullName>
        <shortName evidence="1">Pth</shortName>
        <ecNumber evidence="1">3.1.1.29</ecNumber>
    </recommendedName>
</protein>
<evidence type="ECO:0000255" key="1">
    <source>
        <dbReference type="HAMAP-Rule" id="MF_00083"/>
    </source>
</evidence>
<accession>Q17V73</accession>
<organism>
    <name type="scientific">Helicobacter acinonychis (strain Sheeba)</name>
    <dbReference type="NCBI Taxonomy" id="382638"/>
    <lineage>
        <taxon>Bacteria</taxon>
        <taxon>Pseudomonadati</taxon>
        <taxon>Campylobacterota</taxon>
        <taxon>Epsilonproteobacteria</taxon>
        <taxon>Campylobacterales</taxon>
        <taxon>Helicobacteraceae</taxon>
        <taxon>Helicobacter</taxon>
    </lineage>
</organism>
<proteinExistence type="inferred from homology"/>
<feature type="chain" id="PRO_1000010596" description="Peptidyl-tRNA hydrolase">
    <location>
        <begin position="1"/>
        <end position="186"/>
    </location>
</feature>
<feature type="active site" description="Proton acceptor" evidence="1">
    <location>
        <position position="19"/>
    </location>
</feature>
<feature type="binding site" evidence="1">
    <location>
        <position position="14"/>
    </location>
    <ligand>
        <name>tRNA</name>
        <dbReference type="ChEBI" id="CHEBI:17843"/>
    </ligand>
</feature>
<feature type="binding site" evidence="1">
    <location>
        <position position="61"/>
    </location>
    <ligand>
        <name>tRNA</name>
        <dbReference type="ChEBI" id="CHEBI:17843"/>
    </ligand>
</feature>
<feature type="binding site" evidence="1">
    <location>
        <position position="63"/>
    </location>
    <ligand>
        <name>tRNA</name>
        <dbReference type="ChEBI" id="CHEBI:17843"/>
    </ligand>
</feature>
<feature type="binding site" evidence="1">
    <location>
        <position position="107"/>
    </location>
    <ligand>
        <name>tRNA</name>
        <dbReference type="ChEBI" id="CHEBI:17843"/>
    </ligand>
</feature>
<feature type="site" description="Discriminates between blocked and unblocked aminoacyl-tRNA" evidence="1">
    <location>
        <position position="9"/>
    </location>
</feature>
<feature type="site" description="Stabilizes the basic form of H active site to accept a proton" evidence="1">
    <location>
        <position position="86"/>
    </location>
</feature>
<sequence length="186" mass="20741">MTLLVGLGNPTLRYAHTRHNVGFDILDSLVSGLNLSFTFSPKHNAHLCIYKDFILLKPQTYMNLSGESVLSTKNFYKPKELLIVHDDLDLPLGVVKFKNGGGNGGHNGLKSIDALCSNAYYRLRVGISKGTNATEHVLSKFNENEEPLKNAVFEHAKNALKFFIECNDFNAMCNHFTLKKPLAIET</sequence>